<gene>
    <name type="primary">ATG4A</name>
    <name type="synonym">APG4A</name>
    <name type="ordered locus">Os03g0391000</name>
    <name type="ordered locus">LOC_Os03g27350</name>
    <name type="ORF">OsJ_010666</name>
    <name type="ORF">OSJNBa0017N12.1</name>
    <name type="ORF">OSJNBa0065F09.1</name>
</gene>
<organism>
    <name type="scientific">Oryza sativa subsp. japonica</name>
    <name type="common">Rice</name>
    <dbReference type="NCBI Taxonomy" id="39947"/>
    <lineage>
        <taxon>Eukaryota</taxon>
        <taxon>Viridiplantae</taxon>
        <taxon>Streptophyta</taxon>
        <taxon>Embryophyta</taxon>
        <taxon>Tracheophyta</taxon>
        <taxon>Spermatophyta</taxon>
        <taxon>Magnoliopsida</taxon>
        <taxon>Liliopsida</taxon>
        <taxon>Poales</taxon>
        <taxon>Poaceae</taxon>
        <taxon>BOP clade</taxon>
        <taxon>Oryzoideae</taxon>
        <taxon>Oryzeae</taxon>
        <taxon>Oryzinae</taxon>
        <taxon>Oryza</taxon>
        <taxon>Oryza sativa</taxon>
    </lineage>
</organism>
<evidence type="ECO:0000250" key="1">
    <source>
        <dbReference type="UniProtKB" id="Q2XPP4"/>
    </source>
</evidence>
<evidence type="ECO:0000250" key="2">
    <source>
        <dbReference type="UniProtKB" id="Q8BGE6"/>
    </source>
</evidence>
<evidence type="ECO:0000250" key="3">
    <source>
        <dbReference type="UniProtKB" id="Q9Y4P1"/>
    </source>
</evidence>
<evidence type="ECO:0000256" key="4">
    <source>
        <dbReference type="SAM" id="MobiDB-lite"/>
    </source>
</evidence>
<evidence type="ECO:0000305" key="5"/>
<comment type="function">
    <text evidence="1 3">Cysteine protease that plays a key role in autophagy by mediating both proteolytic activation and delipidation of ATG8 family proteins. The protease activity is required for proteolytic activation of ATG8 family proteins: cleaves the C-terminal amino acid of ATG8 proteins to reveal a C-terminal glycine (By similarity). Exposure of the glycine at the C-terminus is essential for ATG8 proteins conjugation to phosphatidylethanolamine (PE) and insertion to membranes, which is necessary for autophagy. In addition to the protease activity, also mediates delipidation of PE-conjugated ATG8 proteins (By similarity).</text>
</comment>
<comment type="catalytic activity">
    <reaction evidence="3">
        <text>[protein]-C-terminal L-amino acid-glycyl-phosphatidylethanolamide + H2O = [protein]-C-terminal L-amino acid-glycine + a 1,2-diacyl-sn-glycero-3-phosphoethanolamine</text>
        <dbReference type="Rhea" id="RHEA:67548"/>
        <dbReference type="Rhea" id="RHEA-COMP:17323"/>
        <dbReference type="Rhea" id="RHEA-COMP:17324"/>
        <dbReference type="ChEBI" id="CHEBI:15377"/>
        <dbReference type="ChEBI" id="CHEBI:64612"/>
        <dbReference type="ChEBI" id="CHEBI:172940"/>
        <dbReference type="ChEBI" id="CHEBI:172941"/>
    </reaction>
    <physiologicalReaction direction="left-to-right" evidence="3">
        <dbReference type="Rhea" id="RHEA:67549"/>
    </physiologicalReaction>
</comment>
<comment type="subunit">
    <text evidence="1">Interacts with ATG8.</text>
</comment>
<comment type="subcellular location">
    <subcellularLocation>
        <location evidence="2">Cytoplasm</location>
    </subcellularLocation>
</comment>
<comment type="alternative products">
    <event type="alternative splicing"/>
    <isoform>
        <id>Q75KP8-1</id>
        <name>1</name>
        <sequence type="displayed"/>
    </isoform>
    <isoform>
        <id>Q75KP8-2</id>
        <name>2</name>
        <sequence type="described" ref="VSP_025236"/>
    </isoform>
</comment>
<comment type="similarity">
    <text evidence="5">Belongs to the peptidase C54 family.</text>
</comment>
<comment type="sequence caution" evidence="5">
    <conflict type="erroneous gene model prediction">
        <sequence resource="EMBL-CDS" id="BAF12193"/>
    </conflict>
</comment>
<dbReference type="EC" id="3.4.22.-" evidence="3"/>
<dbReference type="EMBL" id="AC092075">
    <property type="protein sequence ID" value="AAR06350.1"/>
    <property type="molecule type" value="Genomic_DNA"/>
</dbReference>
<dbReference type="EMBL" id="AC099323">
    <property type="protein sequence ID" value="AAR87271.1"/>
    <property type="molecule type" value="Genomic_DNA"/>
</dbReference>
<dbReference type="EMBL" id="AC099323">
    <property type="protein sequence ID" value="AAR87272.1"/>
    <property type="molecule type" value="Genomic_DNA"/>
</dbReference>
<dbReference type="EMBL" id="DP000009">
    <property type="protein sequence ID" value="ABF96366.1"/>
    <property type="molecule type" value="Genomic_DNA"/>
</dbReference>
<dbReference type="EMBL" id="DP000009">
    <property type="protein sequence ID" value="ABF96367.1"/>
    <property type="molecule type" value="Genomic_DNA"/>
</dbReference>
<dbReference type="EMBL" id="AP008209">
    <property type="protein sequence ID" value="BAF12193.2"/>
    <property type="status" value="ALT_SEQ"/>
    <property type="molecule type" value="Genomic_DNA"/>
</dbReference>
<dbReference type="EMBL" id="AP014959">
    <property type="protein sequence ID" value="BAS84522.1"/>
    <property type="molecule type" value="Genomic_DNA"/>
</dbReference>
<dbReference type="EMBL" id="CM000140">
    <property type="protein sequence ID" value="EAZ27183.1"/>
    <property type="molecule type" value="Genomic_DNA"/>
</dbReference>
<dbReference type="EMBL" id="AK242832">
    <property type="protein sequence ID" value="BAH01357.1"/>
    <property type="molecule type" value="mRNA"/>
</dbReference>
<dbReference type="RefSeq" id="XP_015627879.1">
    <property type="nucleotide sequence ID" value="XM_015772393.1"/>
</dbReference>
<dbReference type="SMR" id="Q75KP8"/>
<dbReference type="FunCoup" id="Q75KP8">
    <property type="interactions" value="2780"/>
</dbReference>
<dbReference type="STRING" id="39947.Q75KP8"/>
<dbReference type="PaxDb" id="39947-Q75KP8"/>
<dbReference type="EnsemblPlants" id="Os03t0391000-01">
    <molecule id="Q75KP8-1"/>
    <property type="protein sequence ID" value="Os03t0391000-01"/>
    <property type="gene ID" value="Os03g0391000"/>
</dbReference>
<dbReference type="Gramene" id="Os03t0391000-01">
    <molecule id="Q75KP8-1"/>
    <property type="protein sequence ID" value="Os03t0391000-01"/>
    <property type="gene ID" value="Os03g0391000"/>
</dbReference>
<dbReference type="KEGG" id="dosa:Os03g0391000"/>
<dbReference type="eggNOG" id="KOG2674">
    <property type="taxonomic scope" value="Eukaryota"/>
</dbReference>
<dbReference type="HOGENOM" id="CLU_021259_1_0_1"/>
<dbReference type="InParanoid" id="Q75KP8"/>
<dbReference type="OMA" id="PDETFHC"/>
<dbReference type="OrthoDB" id="2960936at2759"/>
<dbReference type="Proteomes" id="UP000000763">
    <property type="component" value="Chromosome 3"/>
</dbReference>
<dbReference type="Proteomes" id="UP000007752">
    <property type="component" value="Chromosome 3"/>
</dbReference>
<dbReference type="Proteomes" id="UP000059680">
    <property type="component" value="Chromosome 3"/>
</dbReference>
<dbReference type="GO" id="GO:0005737">
    <property type="term" value="C:cytoplasm"/>
    <property type="evidence" value="ECO:0000318"/>
    <property type="project" value="GO_Central"/>
</dbReference>
<dbReference type="GO" id="GO:0004197">
    <property type="term" value="F:cysteine-type endopeptidase activity"/>
    <property type="evidence" value="ECO:0000318"/>
    <property type="project" value="GO_Central"/>
</dbReference>
<dbReference type="GO" id="GO:0019786">
    <property type="term" value="F:protein-phosphatidylethanolamide deconjugating activity"/>
    <property type="evidence" value="ECO:0000318"/>
    <property type="project" value="GO_Central"/>
</dbReference>
<dbReference type="GO" id="GO:0035973">
    <property type="term" value="P:aggrephagy"/>
    <property type="evidence" value="ECO:0000318"/>
    <property type="project" value="GO_Central"/>
</dbReference>
<dbReference type="GO" id="GO:0000045">
    <property type="term" value="P:autophagosome assembly"/>
    <property type="evidence" value="ECO:0000318"/>
    <property type="project" value="GO_Central"/>
</dbReference>
<dbReference type="GO" id="GO:0000423">
    <property type="term" value="P:mitophagy"/>
    <property type="evidence" value="ECO:0000318"/>
    <property type="project" value="GO_Central"/>
</dbReference>
<dbReference type="GO" id="GO:0034727">
    <property type="term" value="P:piecemeal microautophagy of the nucleus"/>
    <property type="evidence" value="ECO:0000318"/>
    <property type="project" value="GO_Central"/>
</dbReference>
<dbReference type="GO" id="GO:0016485">
    <property type="term" value="P:protein processing"/>
    <property type="evidence" value="ECO:0000318"/>
    <property type="project" value="GO_Central"/>
</dbReference>
<dbReference type="GO" id="GO:0015031">
    <property type="term" value="P:protein transport"/>
    <property type="evidence" value="ECO:0007669"/>
    <property type="project" value="UniProtKB-KW"/>
</dbReference>
<dbReference type="InterPro" id="IPR038765">
    <property type="entry name" value="Papain-like_cys_pep_sf"/>
</dbReference>
<dbReference type="InterPro" id="IPR005078">
    <property type="entry name" value="Peptidase_C54"/>
</dbReference>
<dbReference type="InterPro" id="IPR046792">
    <property type="entry name" value="Peptidase_C54_cat"/>
</dbReference>
<dbReference type="PANTHER" id="PTHR22624:SF49">
    <property type="entry name" value="CYSTEINE PROTEASE"/>
    <property type="match status" value="1"/>
</dbReference>
<dbReference type="PANTHER" id="PTHR22624">
    <property type="entry name" value="CYSTEINE PROTEASE ATG4"/>
    <property type="match status" value="1"/>
</dbReference>
<dbReference type="Pfam" id="PF03416">
    <property type="entry name" value="Peptidase_C54"/>
    <property type="match status" value="1"/>
</dbReference>
<dbReference type="SUPFAM" id="SSF54001">
    <property type="entry name" value="Cysteine proteinases"/>
    <property type="match status" value="1"/>
</dbReference>
<protein>
    <recommendedName>
        <fullName evidence="5">Cysteine protease ATG4A</fullName>
        <ecNumber evidence="3">3.4.22.-</ecNumber>
    </recommendedName>
    <alternativeName>
        <fullName>Autophagy-related protein 4 homolog A</fullName>
    </alternativeName>
</protein>
<sequence>MTSLPGRGVSPSSSDPLCEGNAAPSSSSSSGQDLKQLKNSILSCVFSSPFSIFEAHQDSSANRSLKPHSGSYAWSRFLRRIACTGSMWRFLGASKALTSSDVWFLGKCYKLSSEELSNSSDCESGNAAFLEDFSSRIWITYRKGFDAISDSKYTSDVNWGCMVRSSQMLVAQALIFHHLGRSWRKPSQKPYSPEYIGILHMFGDSEACAFSIHNLLQAGKSYGLAAGSWVGPYAMCRAWQTLVCTNREHHEAVDGNGNFPMALYVVSGDEDGERGGAPVVCIDVAAQLCCDFNKNQSTWSPILLLVPLVLGLDKLNPRYIPLLKETLTFPQSLGILGGKPGTSTYIAGVQDDRALYLDPHEVQLAVDIAADNLEAGTSSYHCSTVRDLALDLIDPSLAIGFYCRDKDDFDDFCSRASELVDKANGAPLFTVVQSVQPSKQMYNEESSSGDGMDSINVEGLDGSGETGEEEWQIL</sequence>
<reference key="1">
    <citation type="journal article" date="2005" name="Genome Res.">
        <title>Sequence, annotation, and analysis of synteny between rice chromosome 3 and diverged grass species.</title>
        <authorList>
            <consortium name="The rice chromosome 3 sequencing consortium"/>
            <person name="Buell C.R."/>
            <person name="Yuan Q."/>
            <person name="Ouyang S."/>
            <person name="Liu J."/>
            <person name="Zhu W."/>
            <person name="Wang A."/>
            <person name="Maiti R."/>
            <person name="Haas B."/>
            <person name="Wortman J."/>
            <person name="Pertea M."/>
            <person name="Jones K.M."/>
            <person name="Kim M."/>
            <person name="Overton L."/>
            <person name="Tsitrin T."/>
            <person name="Fadrosh D."/>
            <person name="Bera J."/>
            <person name="Weaver B."/>
            <person name="Jin S."/>
            <person name="Johri S."/>
            <person name="Reardon M."/>
            <person name="Webb K."/>
            <person name="Hill J."/>
            <person name="Moffat K."/>
            <person name="Tallon L."/>
            <person name="Van Aken S."/>
            <person name="Lewis M."/>
            <person name="Utterback T."/>
            <person name="Feldblyum T."/>
            <person name="Zismann V."/>
            <person name="Iobst S."/>
            <person name="Hsiao J."/>
            <person name="de Vazeille A.R."/>
            <person name="Salzberg S.L."/>
            <person name="White O."/>
            <person name="Fraser C.M."/>
            <person name="Yu Y."/>
            <person name="Kim H."/>
            <person name="Rambo T."/>
            <person name="Currie J."/>
            <person name="Collura K."/>
            <person name="Kernodle-Thompson S."/>
            <person name="Wei F."/>
            <person name="Kudrna K."/>
            <person name="Ammiraju J.S.S."/>
            <person name="Luo M."/>
            <person name="Goicoechea J.L."/>
            <person name="Wing R.A."/>
            <person name="Henry D."/>
            <person name="Oates R."/>
            <person name="Palmer M."/>
            <person name="Pries G."/>
            <person name="Saski C."/>
            <person name="Simmons J."/>
            <person name="Soderlund C."/>
            <person name="Nelson W."/>
            <person name="de la Bastide M."/>
            <person name="Spiegel L."/>
            <person name="Nascimento L."/>
            <person name="Huang E."/>
            <person name="Preston R."/>
            <person name="Zutavern T."/>
            <person name="Palmer L."/>
            <person name="O'Shaughnessy A."/>
            <person name="Dike S."/>
            <person name="McCombie W.R."/>
            <person name="Minx P."/>
            <person name="Cordum H."/>
            <person name="Wilson R."/>
            <person name="Jin W."/>
            <person name="Lee H.R."/>
            <person name="Jiang J."/>
            <person name="Jackson S."/>
        </authorList>
    </citation>
    <scope>NUCLEOTIDE SEQUENCE [LARGE SCALE GENOMIC DNA]</scope>
    <source>
        <strain>cv. Nipponbare</strain>
    </source>
</reference>
<reference key="2">
    <citation type="journal article" date="2005" name="Nature">
        <title>The map-based sequence of the rice genome.</title>
        <authorList>
            <consortium name="International rice genome sequencing project (IRGSP)"/>
        </authorList>
    </citation>
    <scope>NUCLEOTIDE SEQUENCE [LARGE SCALE GENOMIC DNA]</scope>
    <source>
        <strain>cv. Nipponbare</strain>
    </source>
</reference>
<reference key="3">
    <citation type="journal article" date="2008" name="Nucleic Acids Res.">
        <title>The rice annotation project database (RAP-DB): 2008 update.</title>
        <authorList>
            <consortium name="The rice annotation project (RAP)"/>
        </authorList>
    </citation>
    <scope>GENOME REANNOTATION</scope>
    <source>
        <strain>cv. Nipponbare</strain>
    </source>
</reference>
<reference key="4">
    <citation type="journal article" date="2013" name="Rice">
        <title>Improvement of the Oryza sativa Nipponbare reference genome using next generation sequence and optical map data.</title>
        <authorList>
            <person name="Kawahara Y."/>
            <person name="de la Bastide M."/>
            <person name="Hamilton J.P."/>
            <person name="Kanamori H."/>
            <person name="McCombie W.R."/>
            <person name="Ouyang S."/>
            <person name="Schwartz D.C."/>
            <person name="Tanaka T."/>
            <person name="Wu J."/>
            <person name="Zhou S."/>
            <person name="Childs K.L."/>
            <person name="Davidson R.M."/>
            <person name="Lin H."/>
            <person name="Quesada-Ocampo L."/>
            <person name="Vaillancourt B."/>
            <person name="Sakai H."/>
            <person name="Lee S.S."/>
            <person name="Kim J."/>
            <person name="Numa H."/>
            <person name="Itoh T."/>
            <person name="Buell C.R."/>
            <person name="Matsumoto T."/>
        </authorList>
    </citation>
    <scope>GENOME REANNOTATION</scope>
    <source>
        <strain>cv. Nipponbare</strain>
    </source>
</reference>
<reference key="5">
    <citation type="journal article" date="2005" name="PLoS Biol.">
        <title>The genomes of Oryza sativa: a history of duplications.</title>
        <authorList>
            <person name="Yu J."/>
            <person name="Wang J."/>
            <person name="Lin W."/>
            <person name="Li S."/>
            <person name="Li H."/>
            <person name="Zhou J."/>
            <person name="Ni P."/>
            <person name="Dong W."/>
            <person name="Hu S."/>
            <person name="Zeng C."/>
            <person name="Zhang J."/>
            <person name="Zhang Y."/>
            <person name="Li R."/>
            <person name="Xu Z."/>
            <person name="Li S."/>
            <person name="Li X."/>
            <person name="Zheng H."/>
            <person name="Cong L."/>
            <person name="Lin L."/>
            <person name="Yin J."/>
            <person name="Geng J."/>
            <person name="Li G."/>
            <person name="Shi J."/>
            <person name="Liu J."/>
            <person name="Lv H."/>
            <person name="Li J."/>
            <person name="Wang J."/>
            <person name="Deng Y."/>
            <person name="Ran L."/>
            <person name="Shi X."/>
            <person name="Wang X."/>
            <person name="Wu Q."/>
            <person name="Li C."/>
            <person name="Ren X."/>
            <person name="Wang J."/>
            <person name="Wang X."/>
            <person name="Li D."/>
            <person name="Liu D."/>
            <person name="Zhang X."/>
            <person name="Ji Z."/>
            <person name="Zhao W."/>
            <person name="Sun Y."/>
            <person name="Zhang Z."/>
            <person name="Bao J."/>
            <person name="Han Y."/>
            <person name="Dong L."/>
            <person name="Ji J."/>
            <person name="Chen P."/>
            <person name="Wu S."/>
            <person name="Liu J."/>
            <person name="Xiao Y."/>
            <person name="Bu D."/>
            <person name="Tan J."/>
            <person name="Yang L."/>
            <person name="Ye C."/>
            <person name="Zhang J."/>
            <person name="Xu J."/>
            <person name="Zhou Y."/>
            <person name="Yu Y."/>
            <person name="Zhang B."/>
            <person name="Zhuang S."/>
            <person name="Wei H."/>
            <person name="Liu B."/>
            <person name="Lei M."/>
            <person name="Yu H."/>
            <person name="Li Y."/>
            <person name="Xu H."/>
            <person name="Wei S."/>
            <person name="He X."/>
            <person name="Fang L."/>
            <person name="Zhang Z."/>
            <person name="Zhang Y."/>
            <person name="Huang X."/>
            <person name="Su Z."/>
            <person name="Tong W."/>
            <person name="Li J."/>
            <person name="Tong Z."/>
            <person name="Li S."/>
            <person name="Ye J."/>
            <person name="Wang L."/>
            <person name="Fang L."/>
            <person name="Lei T."/>
            <person name="Chen C.-S."/>
            <person name="Chen H.-C."/>
            <person name="Xu Z."/>
            <person name="Li H."/>
            <person name="Huang H."/>
            <person name="Zhang F."/>
            <person name="Xu H."/>
            <person name="Li N."/>
            <person name="Zhao C."/>
            <person name="Li S."/>
            <person name="Dong L."/>
            <person name="Huang Y."/>
            <person name="Li L."/>
            <person name="Xi Y."/>
            <person name="Qi Q."/>
            <person name="Li W."/>
            <person name="Zhang B."/>
            <person name="Hu W."/>
            <person name="Zhang Y."/>
            <person name="Tian X."/>
            <person name="Jiao Y."/>
            <person name="Liang X."/>
            <person name="Jin J."/>
            <person name="Gao L."/>
            <person name="Zheng W."/>
            <person name="Hao B."/>
            <person name="Liu S.-M."/>
            <person name="Wang W."/>
            <person name="Yuan L."/>
            <person name="Cao M."/>
            <person name="McDermott J."/>
            <person name="Samudrala R."/>
            <person name="Wang J."/>
            <person name="Wong G.K.-S."/>
            <person name="Yang H."/>
        </authorList>
    </citation>
    <scope>NUCLEOTIDE SEQUENCE [LARGE SCALE GENOMIC DNA]</scope>
    <source>
        <strain>cv. Nipponbare</strain>
    </source>
</reference>
<reference key="6">
    <citation type="submission" date="2006-10" db="EMBL/GenBank/DDBJ databases">
        <title>Oryza sativa full length cDNA.</title>
        <authorList>
            <consortium name="The rice full-length cDNA consortium"/>
        </authorList>
    </citation>
    <scope>NUCLEOTIDE SEQUENCE [LARGE SCALE MRNA]</scope>
    <source>
        <strain>cv. Nipponbare</strain>
    </source>
</reference>
<name>ATG4A_ORYSJ</name>
<keyword id="KW-0025">Alternative splicing</keyword>
<keyword id="KW-0072">Autophagy</keyword>
<keyword id="KW-0963">Cytoplasm</keyword>
<keyword id="KW-0378">Hydrolase</keyword>
<keyword id="KW-0645">Protease</keyword>
<keyword id="KW-0653">Protein transport</keyword>
<keyword id="KW-1185">Reference proteome</keyword>
<keyword id="KW-0788">Thiol protease</keyword>
<keyword id="KW-0813">Transport</keyword>
<keyword id="KW-0833">Ubl conjugation pathway</keyword>
<proteinExistence type="evidence at transcript level"/>
<accession>Q75KP8</accession>
<accession>B7F9Q9</accession>
<accession>Q0DRE5</accession>
<accession>Q75KP9</accession>
<accession>Q75LS5</accession>
<feature type="chain" id="PRO_0000286902" description="Cysteine protease ATG4A">
    <location>
        <begin position="1"/>
        <end position="474"/>
    </location>
</feature>
<feature type="region of interest" description="Disordered" evidence="4">
    <location>
        <begin position="1"/>
        <end position="32"/>
    </location>
</feature>
<feature type="region of interest" description="Disordered" evidence="4">
    <location>
        <begin position="439"/>
        <end position="474"/>
    </location>
</feature>
<feature type="compositionally biased region" description="Polar residues" evidence="4">
    <location>
        <begin position="439"/>
        <end position="449"/>
    </location>
</feature>
<feature type="active site" description="Nucleophile" evidence="3">
    <location>
        <position position="161"/>
    </location>
</feature>
<feature type="active site" evidence="3">
    <location>
        <position position="358"/>
    </location>
</feature>
<feature type="active site" evidence="3">
    <location>
        <position position="360"/>
    </location>
</feature>
<feature type="splice variant" id="VSP_025236" description="In isoform 2." evidence="5">
    <original>K</original>
    <variation>KGELLLPDKMLGHHLSSLQSWFSYLLCLSAYV</variation>
    <location>
        <position position="406"/>
    </location>
</feature>